<proteinExistence type="inferred from homology"/>
<keyword id="KW-0067">ATP-binding</keyword>
<keyword id="KW-0963">Cytoplasm</keyword>
<keyword id="KW-0227">DNA damage</keyword>
<keyword id="KW-0228">DNA excision</keyword>
<keyword id="KW-0234">DNA repair</keyword>
<keyword id="KW-0267">Excision nuclease</keyword>
<keyword id="KW-0547">Nucleotide-binding</keyword>
<keyword id="KW-0742">SOS response</keyword>
<sequence>MSEFQLVTRFQPAGDQPEAIRLMVEGIEAGLAHQTLLGVTGSGKTFSIANVIAQVQRPTLVLAPNKTLAAQLYGEFKAFFPNNAVEYFVSYYDYYQPEAYVPSSDTFIEKDASINDHIEQMRLSATKALLERKDAIIVTTVSCIYGLGSPETYLKMVLHVDRGDKLDQRALLRRLADLQYTRNDMDFARATFRVRGDVIDIYPAESDLEAIRIELFDDEVESISAFDPLTGEVIRKLPRFTFYPKSHYVTPRETLLDAIEGIKVELQERLEYLRSNNKLVEAQRLEQRTRFDLEMILELGYCNGIENYSRYLSGRPAGAAPPTLYDYLPADALLVIDESHVSVPQVGAMYKGDRSRKETLVEYGFRLPSALDNRPMRFDEWEGVSPQTIFVSATPGNYEAEHAGRVVEQVVRPTGLVDPQVEVRPALTQVDDLLSEITKRVAVEERVLVTTLTKRMAEDLTDYLADHGVRVRYLHSDIDTVERVEIIRDLRLGTFDVLVGINLLREGLDMPEVSLVAILDADKEGFLRSERSLIQTIGRAARNLNGRAILYADRITGSMERAIGETERRRDKQIAFNLANGITPKGVVKDVADIMEGATVPGSRSKKRKGMAKAAEENARYENELRSPSEITKRIRQLEEKMYQLARDLEFEAAAQMRDEITKLRERLLTV</sequence>
<dbReference type="EMBL" id="CP000076">
    <property type="protein sequence ID" value="AAY91331.1"/>
    <property type="molecule type" value="Genomic_DNA"/>
</dbReference>
<dbReference type="RefSeq" id="WP_011060364.1">
    <property type="nucleotide sequence ID" value="NC_004129.6"/>
</dbReference>
<dbReference type="SMR" id="Q4KF19"/>
<dbReference type="STRING" id="220664.PFL_2046"/>
<dbReference type="GeneID" id="57475089"/>
<dbReference type="KEGG" id="pfl:PFL_2046"/>
<dbReference type="PATRIC" id="fig|220664.5.peg.2083"/>
<dbReference type="eggNOG" id="COG0556">
    <property type="taxonomic scope" value="Bacteria"/>
</dbReference>
<dbReference type="HOGENOM" id="CLU_009621_2_1_6"/>
<dbReference type="Proteomes" id="UP000008540">
    <property type="component" value="Chromosome"/>
</dbReference>
<dbReference type="GO" id="GO:0005737">
    <property type="term" value="C:cytoplasm"/>
    <property type="evidence" value="ECO:0007669"/>
    <property type="project" value="UniProtKB-SubCell"/>
</dbReference>
<dbReference type="GO" id="GO:0009380">
    <property type="term" value="C:excinuclease repair complex"/>
    <property type="evidence" value="ECO:0007669"/>
    <property type="project" value="InterPro"/>
</dbReference>
<dbReference type="GO" id="GO:0005524">
    <property type="term" value="F:ATP binding"/>
    <property type="evidence" value="ECO:0007669"/>
    <property type="project" value="UniProtKB-UniRule"/>
</dbReference>
<dbReference type="GO" id="GO:0016887">
    <property type="term" value="F:ATP hydrolysis activity"/>
    <property type="evidence" value="ECO:0007669"/>
    <property type="project" value="InterPro"/>
</dbReference>
<dbReference type="GO" id="GO:0003677">
    <property type="term" value="F:DNA binding"/>
    <property type="evidence" value="ECO:0007669"/>
    <property type="project" value="UniProtKB-UniRule"/>
</dbReference>
<dbReference type="GO" id="GO:0009381">
    <property type="term" value="F:excinuclease ABC activity"/>
    <property type="evidence" value="ECO:0007669"/>
    <property type="project" value="UniProtKB-UniRule"/>
</dbReference>
<dbReference type="GO" id="GO:0006289">
    <property type="term" value="P:nucleotide-excision repair"/>
    <property type="evidence" value="ECO:0007669"/>
    <property type="project" value="UniProtKB-UniRule"/>
</dbReference>
<dbReference type="GO" id="GO:0009432">
    <property type="term" value="P:SOS response"/>
    <property type="evidence" value="ECO:0007669"/>
    <property type="project" value="UniProtKB-UniRule"/>
</dbReference>
<dbReference type="CDD" id="cd17916">
    <property type="entry name" value="DEXHc_UvrB"/>
    <property type="match status" value="1"/>
</dbReference>
<dbReference type="CDD" id="cd18790">
    <property type="entry name" value="SF2_C_UvrB"/>
    <property type="match status" value="1"/>
</dbReference>
<dbReference type="FunFam" id="3.40.50.300:FF:000477">
    <property type="entry name" value="UvrABC system protein B"/>
    <property type="match status" value="1"/>
</dbReference>
<dbReference type="Gene3D" id="6.10.140.240">
    <property type="match status" value="1"/>
</dbReference>
<dbReference type="Gene3D" id="3.40.50.300">
    <property type="entry name" value="P-loop containing nucleotide triphosphate hydrolases"/>
    <property type="match status" value="3"/>
</dbReference>
<dbReference type="Gene3D" id="4.10.860.10">
    <property type="entry name" value="UVR domain"/>
    <property type="match status" value="1"/>
</dbReference>
<dbReference type="HAMAP" id="MF_00204">
    <property type="entry name" value="UvrB"/>
    <property type="match status" value="1"/>
</dbReference>
<dbReference type="InterPro" id="IPR006935">
    <property type="entry name" value="Helicase/UvrB_N"/>
</dbReference>
<dbReference type="InterPro" id="IPR014001">
    <property type="entry name" value="Helicase_ATP-bd"/>
</dbReference>
<dbReference type="InterPro" id="IPR001650">
    <property type="entry name" value="Helicase_C-like"/>
</dbReference>
<dbReference type="InterPro" id="IPR027417">
    <property type="entry name" value="P-loop_NTPase"/>
</dbReference>
<dbReference type="InterPro" id="IPR001943">
    <property type="entry name" value="UVR_dom"/>
</dbReference>
<dbReference type="InterPro" id="IPR036876">
    <property type="entry name" value="UVR_dom_sf"/>
</dbReference>
<dbReference type="InterPro" id="IPR004807">
    <property type="entry name" value="UvrB"/>
</dbReference>
<dbReference type="InterPro" id="IPR041471">
    <property type="entry name" value="UvrB_inter"/>
</dbReference>
<dbReference type="InterPro" id="IPR024759">
    <property type="entry name" value="UvrB_YAD/RRR_dom"/>
</dbReference>
<dbReference type="NCBIfam" id="NF003673">
    <property type="entry name" value="PRK05298.1"/>
    <property type="match status" value="1"/>
</dbReference>
<dbReference type="NCBIfam" id="TIGR00631">
    <property type="entry name" value="uvrb"/>
    <property type="match status" value="1"/>
</dbReference>
<dbReference type="PANTHER" id="PTHR24029">
    <property type="entry name" value="UVRABC SYSTEM PROTEIN B"/>
    <property type="match status" value="1"/>
</dbReference>
<dbReference type="PANTHER" id="PTHR24029:SF0">
    <property type="entry name" value="UVRABC SYSTEM PROTEIN B"/>
    <property type="match status" value="1"/>
</dbReference>
<dbReference type="Pfam" id="PF00271">
    <property type="entry name" value="Helicase_C"/>
    <property type="match status" value="1"/>
</dbReference>
<dbReference type="Pfam" id="PF04851">
    <property type="entry name" value="ResIII"/>
    <property type="match status" value="1"/>
</dbReference>
<dbReference type="Pfam" id="PF02151">
    <property type="entry name" value="UVR"/>
    <property type="match status" value="1"/>
</dbReference>
<dbReference type="Pfam" id="PF12344">
    <property type="entry name" value="UvrB"/>
    <property type="match status" value="1"/>
</dbReference>
<dbReference type="Pfam" id="PF17757">
    <property type="entry name" value="UvrB_inter"/>
    <property type="match status" value="1"/>
</dbReference>
<dbReference type="SMART" id="SM00487">
    <property type="entry name" value="DEXDc"/>
    <property type="match status" value="1"/>
</dbReference>
<dbReference type="SMART" id="SM00490">
    <property type="entry name" value="HELICc"/>
    <property type="match status" value="1"/>
</dbReference>
<dbReference type="SUPFAM" id="SSF46600">
    <property type="entry name" value="C-terminal UvrC-binding domain of UvrB"/>
    <property type="match status" value="1"/>
</dbReference>
<dbReference type="SUPFAM" id="SSF52540">
    <property type="entry name" value="P-loop containing nucleoside triphosphate hydrolases"/>
    <property type="match status" value="2"/>
</dbReference>
<dbReference type="PROSITE" id="PS51192">
    <property type="entry name" value="HELICASE_ATP_BIND_1"/>
    <property type="match status" value="1"/>
</dbReference>
<dbReference type="PROSITE" id="PS51194">
    <property type="entry name" value="HELICASE_CTER"/>
    <property type="match status" value="1"/>
</dbReference>
<dbReference type="PROSITE" id="PS50151">
    <property type="entry name" value="UVR"/>
    <property type="match status" value="1"/>
</dbReference>
<protein>
    <recommendedName>
        <fullName evidence="1">UvrABC system protein B</fullName>
        <shortName evidence="1">Protein UvrB</shortName>
    </recommendedName>
    <alternativeName>
        <fullName evidence="1">Excinuclease ABC subunit B</fullName>
    </alternativeName>
</protein>
<reference key="1">
    <citation type="journal article" date="2005" name="Nat. Biotechnol.">
        <title>Complete genome sequence of the plant commensal Pseudomonas fluorescens Pf-5.</title>
        <authorList>
            <person name="Paulsen I.T."/>
            <person name="Press C.M."/>
            <person name="Ravel J."/>
            <person name="Kobayashi D.Y."/>
            <person name="Myers G.S.A."/>
            <person name="Mavrodi D.V."/>
            <person name="DeBoy R.T."/>
            <person name="Seshadri R."/>
            <person name="Ren Q."/>
            <person name="Madupu R."/>
            <person name="Dodson R.J."/>
            <person name="Durkin A.S."/>
            <person name="Brinkac L.M."/>
            <person name="Daugherty S.C."/>
            <person name="Sullivan S.A."/>
            <person name="Rosovitz M.J."/>
            <person name="Gwinn M.L."/>
            <person name="Zhou L."/>
            <person name="Schneider D.J."/>
            <person name="Cartinhour S.W."/>
            <person name="Nelson W.C."/>
            <person name="Weidman J."/>
            <person name="Watkins K."/>
            <person name="Tran K."/>
            <person name="Khouri H."/>
            <person name="Pierson E.A."/>
            <person name="Pierson L.S. III"/>
            <person name="Thomashow L.S."/>
            <person name="Loper J.E."/>
        </authorList>
    </citation>
    <scope>NUCLEOTIDE SEQUENCE [LARGE SCALE GENOMIC DNA]</scope>
    <source>
        <strain>ATCC BAA-477 / NRRL B-23932 / Pf-5</strain>
    </source>
</reference>
<evidence type="ECO:0000255" key="1">
    <source>
        <dbReference type="HAMAP-Rule" id="MF_00204"/>
    </source>
</evidence>
<evidence type="ECO:0000256" key="2">
    <source>
        <dbReference type="SAM" id="MobiDB-lite"/>
    </source>
</evidence>
<comment type="function">
    <text evidence="1">The UvrABC repair system catalyzes the recognition and processing of DNA lesions. A damage recognition complex composed of 2 UvrA and 2 UvrB subunits scans DNA for abnormalities. Upon binding of the UvrA(2)B(2) complex to a putative damaged site, the DNA wraps around one UvrB monomer. DNA wrap is dependent on ATP binding by UvrB and probably causes local melting of the DNA helix, facilitating insertion of UvrB beta-hairpin between the DNA strands. Then UvrB probes one DNA strand for the presence of a lesion. If a lesion is found the UvrA subunits dissociate and the UvrB-DNA preincision complex is formed. This complex is subsequently bound by UvrC and the second UvrB is released. If no lesion is found, the DNA wraps around the other UvrB subunit that will check the other stand for damage.</text>
</comment>
<comment type="subunit">
    <text evidence="1">Forms a heterotetramer with UvrA during the search for lesions. Interacts with UvrC in an incision complex.</text>
</comment>
<comment type="subcellular location">
    <subcellularLocation>
        <location evidence="1">Cytoplasm</location>
    </subcellularLocation>
</comment>
<comment type="domain">
    <text evidence="1">The beta-hairpin motif is involved in DNA binding.</text>
</comment>
<comment type="similarity">
    <text evidence="1">Belongs to the UvrB family.</text>
</comment>
<accession>Q4KF19</accession>
<gene>
    <name evidence="1" type="primary">uvrB</name>
    <name type="ordered locus">PFL_2046</name>
</gene>
<organism>
    <name type="scientific">Pseudomonas fluorescens (strain ATCC BAA-477 / NRRL B-23932 / Pf-5)</name>
    <dbReference type="NCBI Taxonomy" id="220664"/>
    <lineage>
        <taxon>Bacteria</taxon>
        <taxon>Pseudomonadati</taxon>
        <taxon>Pseudomonadota</taxon>
        <taxon>Gammaproteobacteria</taxon>
        <taxon>Pseudomonadales</taxon>
        <taxon>Pseudomonadaceae</taxon>
        <taxon>Pseudomonas</taxon>
    </lineage>
</organism>
<name>UVRB_PSEF5</name>
<feature type="chain" id="PRO_0000227347" description="UvrABC system protein B">
    <location>
        <begin position="1"/>
        <end position="671"/>
    </location>
</feature>
<feature type="domain" description="Helicase ATP-binding" evidence="1">
    <location>
        <begin position="25"/>
        <end position="412"/>
    </location>
</feature>
<feature type="domain" description="Helicase C-terminal" evidence="1">
    <location>
        <begin position="429"/>
        <end position="582"/>
    </location>
</feature>
<feature type="domain" description="UVR" evidence="1">
    <location>
        <begin position="632"/>
        <end position="667"/>
    </location>
</feature>
<feature type="region of interest" description="Disordered" evidence="2">
    <location>
        <begin position="601"/>
        <end position="623"/>
    </location>
</feature>
<feature type="short sequence motif" description="Beta-hairpin">
    <location>
        <begin position="91"/>
        <end position="114"/>
    </location>
</feature>
<feature type="compositionally biased region" description="Basic and acidic residues" evidence="2">
    <location>
        <begin position="614"/>
        <end position="623"/>
    </location>
</feature>
<feature type="binding site" evidence="1">
    <location>
        <begin position="38"/>
        <end position="45"/>
    </location>
    <ligand>
        <name>ATP</name>
        <dbReference type="ChEBI" id="CHEBI:30616"/>
    </ligand>
</feature>